<accession>B7HQU9</accession>
<protein>
    <recommendedName>
        <fullName evidence="1">Large ribosomal subunit protein uL22</fullName>
    </recommendedName>
    <alternativeName>
        <fullName evidence="2">50S ribosomal protein L22</fullName>
    </alternativeName>
</protein>
<evidence type="ECO:0000255" key="1">
    <source>
        <dbReference type="HAMAP-Rule" id="MF_01331"/>
    </source>
</evidence>
<evidence type="ECO:0000305" key="2"/>
<organism>
    <name type="scientific">Bacillus cereus (strain AH187)</name>
    <dbReference type="NCBI Taxonomy" id="405534"/>
    <lineage>
        <taxon>Bacteria</taxon>
        <taxon>Bacillati</taxon>
        <taxon>Bacillota</taxon>
        <taxon>Bacilli</taxon>
        <taxon>Bacillales</taxon>
        <taxon>Bacillaceae</taxon>
        <taxon>Bacillus</taxon>
        <taxon>Bacillus cereus group</taxon>
    </lineage>
</organism>
<name>RL22_BACC7</name>
<feature type="chain" id="PRO_1000142230" description="Large ribosomal subunit protein uL22">
    <location>
        <begin position="1"/>
        <end position="113"/>
    </location>
</feature>
<dbReference type="EMBL" id="CP001177">
    <property type="protein sequence ID" value="ACJ80473.1"/>
    <property type="molecule type" value="Genomic_DNA"/>
</dbReference>
<dbReference type="SMR" id="B7HQU9"/>
<dbReference type="KEGG" id="bcr:BCAH187_A0146"/>
<dbReference type="HOGENOM" id="CLU_083987_3_3_9"/>
<dbReference type="Proteomes" id="UP000002214">
    <property type="component" value="Chromosome"/>
</dbReference>
<dbReference type="GO" id="GO:0022625">
    <property type="term" value="C:cytosolic large ribosomal subunit"/>
    <property type="evidence" value="ECO:0007669"/>
    <property type="project" value="TreeGrafter"/>
</dbReference>
<dbReference type="GO" id="GO:0019843">
    <property type="term" value="F:rRNA binding"/>
    <property type="evidence" value="ECO:0007669"/>
    <property type="project" value="UniProtKB-UniRule"/>
</dbReference>
<dbReference type="GO" id="GO:0003735">
    <property type="term" value="F:structural constituent of ribosome"/>
    <property type="evidence" value="ECO:0007669"/>
    <property type="project" value="InterPro"/>
</dbReference>
<dbReference type="GO" id="GO:0006412">
    <property type="term" value="P:translation"/>
    <property type="evidence" value="ECO:0007669"/>
    <property type="project" value="UniProtKB-UniRule"/>
</dbReference>
<dbReference type="CDD" id="cd00336">
    <property type="entry name" value="Ribosomal_L22"/>
    <property type="match status" value="1"/>
</dbReference>
<dbReference type="FunFam" id="3.90.470.10:FF:000001">
    <property type="entry name" value="50S ribosomal protein L22"/>
    <property type="match status" value="1"/>
</dbReference>
<dbReference type="Gene3D" id="3.90.470.10">
    <property type="entry name" value="Ribosomal protein L22/L17"/>
    <property type="match status" value="1"/>
</dbReference>
<dbReference type="HAMAP" id="MF_01331_B">
    <property type="entry name" value="Ribosomal_uL22_B"/>
    <property type="match status" value="1"/>
</dbReference>
<dbReference type="InterPro" id="IPR001063">
    <property type="entry name" value="Ribosomal_uL22"/>
</dbReference>
<dbReference type="InterPro" id="IPR005727">
    <property type="entry name" value="Ribosomal_uL22_bac/chlpt-type"/>
</dbReference>
<dbReference type="InterPro" id="IPR047867">
    <property type="entry name" value="Ribosomal_uL22_bac/org-type"/>
</dbReference>
<dbReference type="InterPro" id="IPR018260">
    <property type="entry name" value="Ribosomal_uL22_CS"/>
</dbReference>
<dbReference type="InterPro" id="IPR036394">
    <property type="entry name" value="Ribosomal_uL22_sf"/>
</dbReference>
<dbReference type="NCBIfam" id="TIGR01044">
    <property type="entry name" value="rplV_bact"/>
    <property type="match status" value="1"/>
</dbReference>
<dbReference type="PANTHER" id="PTHR13501">
    <property type="entry name" value="CHLOROPLAST 50S RIBOSOMAL PROTEIN L22-RELATED"/>
    <property type="match status" value="1"/>
</dbReference>
<dbReference type="PANTHER" id="PTHR13501:SF8">
    <property type="entry name" value="LARGE RIBOSOMAL SUBUNIT PROTEIN UL22M"/>
    <property type="match status" value="1"/>
</dbReference>
<dbReference type="Pfam" id="PF00237">
    <property type="entry name" value="Ribosomal_L22"/>
    <property type="match status" value="1"/>
</dbReference>
<dbReference type="SUPFAM" id="SSF54843">
    <property type="entry name" value="Ribosomal protein L22"/>
    <property type="match status" value="1"/>
</dbReference>
<dbReference type="PROSITE" id="PS00464">
    <property type="entry name" value="RIBOSOMAL_L22"/>
    <property type="match status" value="1"/>
</dbReference>
<proteinExistence type="inferred from homology"/>
<sequence>MQAKAVARTVRIAPRKVRLVVDLIRGKQVGEAIAILNHTPKTASPVVEKVLKSAIANAEHNYEMDINNLVVEKVFVDEGPTLKRFRPRAMGRASQINKRTSHITVVVSEKKEG</sequence>
<gene>
    <name evidence="1" type="primary">rplV</name>
    <name type="ordered locus">BCAH187_A0146</name>
</gene>
<reference key="1">
    <citation type="submission" date="2008-10" db="EMBL/GenBank/DDBJ databases">
        <title>Genome sequence of Bacillus cereus AH187.</title>
        <authorList>
            <person name="Dodson R.J."/>
            <person name="Durkin A.S."/>
            <person name="Rosovitz M.J."/>
            <person name="Rasko D.A."/>
            <person name="Kolsto A.B."/>
            <person name="Okstad O.A."/>
            <person name="Ravel J."/>
            <person name="Sutton G."/>
        </authorList>
    </citation>
    <scope>NUCLEOTIDE SEQUENCE [LARGE SCALE GENOMIC DNA]</scope>
    <source>
        <strain>AH187</strain>
    </source>
</reference>
<keyword id="KW-0687">Ribonucleoprotein</keyword>
<keyword id="KW-0689">Ribosomal protein</keyword>
<keyword id="KW-0694">RNA-binding</keyword>
<keyword id="KW-0699">rRNA-binding</keyword>
<comment type="function">
    <text evidence="1">This protein binds specifically to 23S rRNA; its binding is stimulated by other ribosomal proteins, e.g. L4, L17, and L20. It is important during the early stages of 50S assembly. It makes multiple contacts with different domains of the 23S rRNA in the assembled 50S subunit and ribosome (By similarity).</text>
</comment>
<comment type="function">
    <text evidence="1">The globular domain of the protein is located near the polypeptide exit tunnel on the outside of the subunit, while an extended beta-hairpin is found that lines the wall of the exit tunnel in the center of the 70S ribosome.</text>
</comment>
<comment type="subunit">
    <text evidence="1">Part of the 50S ribosomal subunit.</text>
</comment>
<comment type="similarity">
    <text evidence="1">Belongs to the universal ribosomal protein uL22 family.</text>
</comment>